<gene>
    <name type="ordered locus">Pnap_3664</name>
</gene>
<protein>
    <recommendedName>
        <fullName evidence="1">Putative glutamate--cysteine ligase 2</fullName>
        <ecNumber evidence="1">6.3.2.2</ecNumber>
    </recommendedName>
    <alternativeName>
        <fullName evidence="1">Gamma-glutamylcysteine synthetase 2</fullName>
        <shortName evidence="1">GCS 2</shortName>
        <shortName evidence="1">Gamma-GCS 2</shortName>
    </alternativeName>
</protein>
<feature type="chain" id="PRO_0000291507" description="Putative glutamate--cysteine ligase 2">
    <location>
        <begin position="1"/>
        <end position="381"/>
    </location>
</feature>
<accession>A1VTI2</accession>
<sequence length="381" mass="43146">MSLEPFQKSSALSLGVELEMQLVNTHDYDLAPYAEDMLRLMSKIALPGAVVPEMTSSMIEVSTGICHSSAEVLGQLTQIRDALVKSADKLNIAVVGGGTHPFQQWHERRIYDKPRFRELSELYGYLSKQFTIFGQHVHIGCPDADTALLTLHRMSRYIPHFIALSASSPYVQGQDTAFDSARLNSVFAFPLSGRAPFALTWDEFTVYFNKMAHTGVVKSMKDFYWDIRPKPEFGTIEIRVFDTPLTIERATALAGYVQSLGSWFMNDQPFMPTEDDYLVYTYNRFQACRFGLDAVYVDPATGGHMPLREHILMTMAQIERHAHRLDASASIHLLRTSVERNDNDARWLRERQGEERLLAEVIRQAADRFRGGVDHEPGGFS</sequence>
<proteinExistence type="inferred from homology"/>
<dbReference type="EC" id="6.3.2.2" evidence="1"/>
<dbReference type="EMBL" id="CP000529">
    <property type="protein sequence ID" value="ABM38960.1"/>
    <property type="molecule type" value="Genomic_DNA"/>
</dbReference>
<dbReference type="RefSeq" id="WP_011803026.1">
    <property type="nucleotide sequence ID" value="NC_008781.1"/>
</dbReference>
<dbReference type="SMR" id="A1VTI2"/>
<dbReference type="STRING" id="365044.Pnap_3664"/>
<dbReference type="KEGG" id="pna:Pnap_3664"/>
<dbReference type="eggNOG" id="COG2170">
    <property type="taxonomic scope" value="Bacteria"/>
</dbReference>
<dbReference type="HOGENOM" id="CLU_044848_1_1_4"/>
<dbReference type="OrthoDB" id="9769628at2"/>
<dbReference type="Proteomes" id="UP000000644">
    <property type="component" value="Chromosome"/>
</dbReference>
<dbReference type="GO" id="GO:0005524">
    <property type="term" value="F:ATP binding"/>
    <property type="evidence" value="ECO:0007669"/>
    <property type="project" value="UniProtKB-KW"/>
</dbReference>
<dbReference type="GO" id="GO:0004357">
    <property type="term" value="F:glutamate-cysteine ligase activity"/>
    <property type="evidence" value="ECO:0007669"/>
    <property type="project" value="UniProtKB-EC"/>
</dbReference>
<dbReference type="GO" id="GO:0042398">
    <property type="term" value="P:modified amino acid biosynthetic process"/>
    <property type="evidence" value="ECO:0007669"/>
    <property type="project" value="InterPro"/>
</dbReference>
<dbReference type="Gene3D" id="3.30.590.20">
    <property type="match status" value="1"/>
</dbReference>
<dbReference type="HAMAP" id="MF_01609">
    <property type="entry name" value="Glu_cys_ligase_2"/>
    <property type="match status" value="1"/>
</dbReference>
<dbReference type="InterPro" id="IPR050141">
    <property type="entry name" value="GCL_type2/YbdK_subfam"/>
</dbReference>
<dbReference type="InterPro" id="IPR006336">
    <property type="entry name" value="GCS2"/>
</dbReference>
<dbReference type="InterPro" id="IPR014746">
    <property type="entry name" value="Gln_synth/guanido_kin_cat_dom"/>
</dbReference>
<dbReference type="InterPro" id="IPR011793">
    <property type="entry name" value="YbdK"/>
</dbReference>
<dbReference type="NCBIfam" id="TIGR02050">
    <property type="entry name" value="gshA_cyan_rel"/>
    <property type="match status" value="1"/>
</dbReference>
<dbReference type="NCBIfam" id="NF010040">
    <property type="entry name" value="PRK13516.1"/>
    <property type="match status" value="1"/>
</dbReference>
<dbReference type="PANTHER" id="PTHR36510">
    <property type="entry name" value="GLUTAMATE--CYSTEINE LIGASE 2-RELATED"/>
    <property type="match status" value="1"/>
</dbReference>
<dbReference type="PANTHER" id="PTHR36510:SF1">
    <property type="entry name" value="GLUTAMATE--CYSTEINE LIGASE 2-RELATED"/>
    <property type="match status" value="1"/>
</dbReference>
<dbReference type="Pfam" id="PF04107">
    <property type="entry name" value="GCS2"/>
    <property type="match status" value="1"/>
</dbReference>
<dbReference type="SUPFAM" id="SSF55931">
    <property type="entry name" value="Glutamine synthetase/guanido kinase"/>
    <property type="match status" value="1"/>
</dbReference>
<reference key="1">
    <citation type="journal article" date="2009" name="Environ. Microbiol.">
        <title>The genome of Polaromonas naphthalenivorans strain CJ2, isolated from coal tar-contaminated sediment, reveals physiological and metabolic versatility and evolution through extensive horizontal gene transfer.</title>
        <authorList>
            <person name="Yagi J.M."/>
            <person name="Sims D."/>
            <person name="Brettin T."/>
            <person name="Bruce D."/>
            <person name="Madsen E.L."/>
        </authorList>
    </citation>
    <scope>NUCLEOTIDE SEQUENCE [LARGE SCALE GENOMIC DNA]</scope>
    <source>
        <strain>CJ2</strain>
    </source>
</reference>
<evidence type="ECO:0000255" key="1">
    <source>
        <dbReference type="HAMAP-Rule" id="MF_01609"/>
    </source>
</evidence>
<name>GCS2_POLNA</name>
<keyword id="KW-0067">ATP-binding</keyword>
<keyword id="KW-0436">Ligase</keyword>
<keyword id="KW-0547">Nucleotide-binding</keyword>
<keyword id="KW-1185">Reference proteome</keyword>
<organism>
    <name type="scientific">Polaromonas naphthalenivorans (strain CJ2)</name>
    <dbReference type="NCBI Taxonomy" id="365044"/>
    <lineage>
        <taxon>Bacteria</taxon>
        <taxon>Pseudomonadati</taxon>
        <taxon>Pseudomonadota</taxon>
        <taxon>Betaproteobacteria</taxon>
        <taxon>Burkholderiales</taxon>
        <taxon>Comamonadaceae</taxon>
        <taxon>Polaromonas</taxon>
    </lineage>
</organism>
<comment type="function">
    <text evidence="1">ATP-dependent carboxylate-amine ligase which exhibits weak glutamate--cysteine ligase activity.</text>
</comment>
<comment type="catalytic activity">
    <reaction evidence="1">
        <text>L-cysteine + L-glutamate + ATP = gamma-L-glutamyl-L-cysteine + ADP + phosphate + H(+)</text>
        <dbReference type="Rhea" id="RHEA:13285"/>
        <dbReference type="ChEBI" id="CHEBI:15378"/>
        <dbReference type="ChEBI" id="CHEBI:29985"/>
        <dbReference type="ChEBI" id="CHEBI:30616"/>
        <dbReference type="ChEBI" id="CHEBI:35235"/>
        <dbReference type="ChEBI" id="CHEBI:43474"/>
        <dbReference type="ChEBI" id="CHEBI:58173"/>
        <dbReference type="ChEBI" id="CHEBI:456216"/>
        <dbReference type="EC" id="6.3.2.2"/>
    </reaction>
</comment>
<comment type="similarity">
    <text evidence="1">Belongs to the glutamate--cysteine ligase type 2 family. YbdK subfamily.</text>
</comment>